<feature type="chain" id="PRO_0000312238" description="Protein tweety homolog 1">
    <location>
        <begin position="1"/>
        <end position="450"/>
    </location>
</feature>
<feature type="topological domain" description="Extracellular" evidence="2">
    <location>
        <begin position="1"/>
        <end position="43"/>
    </location>
</feature>
<feature type="transmembrane region" description="Helical; Name=1" evidence="3">
    <location>
        <begin position="44"/>
        <end position="64"/>
    </location>
</feature>
<feature type="topological domain" description="Cytoplasmic" evidence="2">
    <location>
        <begin position="65"/>
        <end position="88"/>
    </location>
</feature>
<feature type="transmembrane region" description="Helical; Name=2" evidence="3">
    <location>
        <begin position="89"/>
        <end position="109"/>
    </location>
</feature>
<feature type="topological domain" description="Extracellular" evidence="2">
    <location>
        <begin position="110"/>
        <end position="214"/>
    </location>
</feature>
<feature type="transmembrane region" description="Helical; Name=3" evidence="3">
    <location>
        <begin position="215"/>
        <end position="235"/>
    </location>
</feature>
<feature type="topological domain" description="Cytoplasmic" evidence="2">
    <location>
        <begin position="236"/>
        <end position="240"/>
    </location>
</feature>
<feature type="transmembrane region" description="Helical; Name=4" evidence="3">
    <location>
        <begin position="241"/>
        <end position="261"/>
    </location>
</feature>
<feature type="topological domain" description="Extracellular" evidence="2">
    <location>
        <begin position="262"/>
        <end position="390"/>
    </location>
</feature>
<feature type="transmembrane region" description="Helical; Name=5" evidence="3">
    <location>
        <begin position="391"/>
        <end position="411"/>
    </location>
</feature>
<feature type="topological domain" description="Cytoplasmic" evidence="2">
    <location>
        <begin position="412"/>
        <end position="450"/>
    </location>
</feature>
<feature type="region of interest" description="Disordered" evidence="4">
    <location>
        <begin position="427"/>
        <end position="450"/>
    </location>
</feature>
<feature type="site" description="Essential for the formation of the channel-pore" evidence="1">
    <location>
        <position position="165"/>
    </location>
</feature>
<feature type="modified residue" description="Phosphoserine" evidence="1">
    <location>
        <position position="440"/>
    </location>
</feature>
<feature type="glycosylation site" description="N-linked (GlcNAc...) asparagine" evidence="3">
    <location>
        <position position="130"/>
    </location>
</feature>
<feature type="glycosylation site" description="N-linked (GlcNAc...) asparagine" evidence="3">
    <location>
        <position position="284"/>
    </location>
</feature>
<feature type="glycosylation site" description="N-linked (GlcNAc...) asparagine" evidence="3">
    <location>
        <position position="355"/>
    </location>
</feature>
<feature type="disulfide bond" evidence="2">
    <location>
        <begin position="275"/>
        <end position="385"/>
    </location>
</feature>
<feature type="disulfide bond" evidence="2">
    <location>
        <begin position="303"/>
        <end position="370"/>
    </location>
</feature>
<protein>
    <recommendedName>
        <fullName>Protein tweety homolog 1</fullName>
    </recommendedName>
    <alternativeName>
        <fullName evidence="1">Volume-regulated anion channel subunit TTYH1</fullName>
    </alternativeName>
</protein>
<comment type="function">
    <text evidence="1">Calcium-independent, swelling-dependent volume-regulated anion channel (VRAC-swell) which plays a pivotal role in the process of regulatory volume decrease (RVD) in the brain through the efflux of anions like chloride and organic osmolytes like glutamate.</text>
</comment>
<comment type="catalytic activity">
    <reaction evidence="1">
        <text>chloride(in) = chloride(out)</text>
        <dbReference type="Rhea" id="RHEA:29823"/>
        <dbReference type="ChEBI" id="CHEBI:17996"/>
    </reaction>
</comment>
<comment type="catalytic activity">
    <reaction evidence="1">
        <text>L-glutamate(out) = L-glutamate(in)</text>
        <dbReference type="Rhea" id="RHEA:66336"/>
        <dbReference type="ChEBI" id="CHEBI:29985"/>
    </reaction>
    <physiologicalReaction direction="right-to-left" evidence="1">
        <dbReference type="Rhea" id="RHEA:66338"/>
    </physiologicalReaction>
</comment>
<comment type="subunit">
    <text evidence="1 2">Homotetramer; disulfide-linked. Homodimer.</text>
</comment>
<comment type="subcellular location">
    <subcellularLocation>
        <location evidence="1">Cell membrane</location>
        <topology evidence="3">Multi-pass membrane protein</topology>
    </subcellularLocation>
</comment>
<comment type="PTM">
    <text evidence="2">N-glycosylated. Contains high-mannose, hybrid and complex oligosaccharides.</text>
</comment>
<comment type="similarity">
    <text evidence="5">Belongs to the tweety family.</text>
</comment>
<evidence type="ECO:0000250" key="1">
    <source>
        <dbReference type="UniProtKB" id="Q9D3A9"/>
    </source>
</evidence>
<evidence type="ECO:0000250" key="2">
    <source>
        <dbReference type="UniProtKB" id="Q9H313"/>
    </source>
</evidence>
<evidence type="ECO:0000255" key="3"/>
<evidence type="ECO:0000256" key="4">
    <source>
        <dbReference type="SAM" id="MobiDB-lite"/>
    </source>
</evidence>
<evidence type="ECO:0000305" key="5"/>
<keyword id="KW-0130">Cell adhesion</keyword>
<keyword id="KW-1003">Cell membrane</keyword>
<keyword id="KW-0868">Chloride</keyword>
<keyword id="KW-0869">Chloride channel</keyword>
<keyword id="KW-1015">Disulfide bond</keyword>
<keyword id="KW-0325">Glycoprotein</keyword>
<keyword id="KW-0407">Ion channel</keyword>
<keyword id="KW-0406">Ion transport</keyword>
<keyword id="KW-0472">Membrane</keyword>
<keyword id="KW-0597">Phosphoprotein</keyword>
<keyword id="KW-1185">Reference proteome</keyword>
<keyword id="KW-0812">Transmembrane</keyword>
<keyword id="KW-1133">Transmembrane helix</keyword>
<keyword id="KW-0813">Transport</keyword>
<name>TTYH1_BOVIN</name>
<dbReference type="EMBL" id="BC105448">
    <property type="protein sequence ID" value="AAI05449.1"/>
    <property type="molecule type" value="mRNA"/>
</dbReference>
<dbReference type="RefSeq" id="NP_001070483.1">
    <property type="nucleotide sequence ID" value="NM_001077015.1"/>
</dbReference>
<dbReference type="SMR" id="Q2KJ98"/>
<dbReference type="FunCoup" id="Q2KJ98">
    <property type="interactions" value="1071"/>
</dbReference>
<dbReference type="STRING" id="9913.ENSBTAP00000070050"/>
<dbReference type="GlyCosmos" id="Q2KJ98">
    <property type="glycosylation" value="3 sites, No reported glycans"/>
</dbReference>
<dbReference type="GlyGen" id="Q2KJ98">
    <property type="glycosylation" value="3 sites"/>
</dbReference>
<dbReference type="PaxDb" id="9913-ENSBTAP00000004515"/>
<dbReference type="GeneID" id="767943"/>
<dbReference type="KEGG" id="bta:767943"/>
<dbReference type="CTD" id="57348"/>
<dbReference type="eggNOG" id="KOG4433">
    <property type="taxonomic scope" value="Eukaryota"/>
</dbReference>
<dbReference type="InParanoid" id="Q2KJ98"/>
<dbReference type="OrthoDB" id="187568at2759"/>
<dbReference type="Proteomes" id="UP000009136">
    <property type="component" value="Unplaced"/>
</dbReference>
<dbReference type="GO" id="GO:0034707">
    <property type="term" value="C:chloride channel complex"/>
    <property type="evidence" value="ECO:0007669"/>
    <property type="project" value="UniProtKB-KW"/>
</dbReference>
<dbReference type="GO" id="GO:0005886">
    <property type="term" value="C:plasma membrane"/>
    <property type="evidence" value="ECO:0000250"/>
    <property type="project" value="UniProtKB"/>
</dbReference>
<dbReference type="GO" id="GO:0030868">
    <property type="term" value="C:smooth endoplasmic reticulum membrane"/>
    <property type="evidence" value="ECO:0000318"/>
    <property type="project" value="GO_Central"/>
</dbReference>
<dbReference type="GO" id="GO:0005229">
    <property type="term" value="F:intracellularly calcium-gated chloride channel activity"/>
    <property type="evidence" value="ECO:0000318"/>
    <property type="project" value="GO_Central"/>
</dbReference>
<dbReference type="GO" id="GO:0072320">
    <property type="term" value="F:volume-sensitive chloride channel activity"/>
    <property type="evidence" value="ECO:0000250"/>
    <property type="project" value="UniProtKB"/>
</dbReference>
<dbReference type="GO" id="GO:0007155">
    <property type="term" value="P:cell adhesion"/>
    <property type="evidence" value="ECO:0007669"/>
    <property type="project" value="UniProtKB-KW"/>
</dbReference>
<dbReference type="GO" id="GO:0015813">
    <property type="term" value="P:L-glutamate transmembrane transport"/>
    <property type="evidence" value="ECO:0000250"/>
    <property type="project" value="UniProtKB"/>
</dbReference>
<dbReference type="CDD" id="cd07912">
    <property type="entry name" value="Tweety_N"/>
    <property type="match status" value="1"/>
</dbReference>
<dbReference type="InterPro" id="IPR006990">
    <property type="entry name" value="Tweety"/>
</dbReference>
<dbReference type="PANTHER" id="PTHR12424:SF5">
    <property type="entry name" value="PROTEIN TWEETY HOMOLOG 1"/>
    <property type="match status" value="1"/>
</dbReference>
<dbReference type="PANTHER" id="PTHR12424">
    <property type="entry name" value="TWEETY-RELATED"/>
    <property type="match status" value="1"/>
</dbReference>
<dbReference type="Pfam" id="PF04906">
    <property type="entry name" value="Tweety"/>
    <property type="match status" value="1"/>
</dbReference>
<proteinExistence type="evidence at transcript level"/>
<organism>
    <name type="scientific">Bos taurus</name>
    <name type="common">Bovine</name>
    <dbReference type="NCBI Taxonomy" id="9913"/>
    <lineage>
        <taxon>Eukaryota</taxon>
        <taxon>Metazoa</taxon>
        <taxon>Chordata</taxon>
        <taxon>Craniata</taxon>
        <taxon>Vertebrata</taxon>
        <taxon>Euteleostomi</taxon>
        <taxon>Mammalia</taxon>
        <taxon>Eutheria</taxon>
        <taxon>Laurasiatheria</taxon>
        <taxon>Artiodactyla</taxon>
        <taxon>Ruminantia</taxon>
        <taxon>Pecora</taxon>
        <taxon>Bovidae</taxon>
        <taxon>Bovinae</taxon>
        <taxon>Bos</taxon>
    </lineage>
</organism>
<gene>
    <name type="primary">TTYH1</name>
</gene>
<reference key="1">
    <citation type="submission" date="2005-09" db="EMBL/GenBank/DDBJ databases">
        <authorList>
            <consortium name="NIH - Mammalian Gene Collection (MGC) project"/>
        </authorList>
    </citation>
    <scope>NUCLEOTIDE SEQUENCE [LARGE SCALE MRNA]</scope>
    <source>
        <strain>Hereford</strain>
        <tissue>Hypothalamus</tissue>
    </source>
</reference>
<accession>Q2KJ98</accession>
<sequence>MGAPPGYRPSAWVHLLHQLPRADFQLRPVPSAFAPQEREYQQALLLVAALAGLGLGLSLIFIAVYLIRFCCCRPPEPPGAKSPPPGGGCVTWNCIAALLVGCAGIGVGFYGNSETSDGVSQLSSALLHANHTLTAIDHLVLEMVERLNEAVRTELTTLEEVLTQRTELVAAARGARRQAETVAQQLQGLAFWRGVPLSPLQVAEDVSFVEEYRWLAYVLLLLLELLVCLFTLLGLARQSKWLVIVMTVMSLLVLVLSWGSMGLEAATAVGLSDFCSSPDSYILNLTQEETGLGSDILNYYFLCNQAVSNPFQQRLTLSQRALANIHSQLQGLEREAVPQFPSAQKPVLSLEETLNVTEGNFHQLVALLHCRGLHKDYGSALRGLCEDTLEGLLFLLLFSLLSAGALATVLCSLPRAWALFPPSDDYEDTDDDDPFNPQESKRFVQWQSSI</sequence>